<name>TAILC_BPSK2</name>
<protein>
    <recommendedName>
        <fullName evidence="1">Major tail tube protein</fullName>
    </recommendedName>
    <alternativeName>
        <fullName evidence="5">GpFII-like protein</fullName>
    </alternativeName>
    <alternativeName>
        <fullName evidence="3">Virion protein C</fullName>
    </alternativeName>
</protein>
<organismHost>
    <name type="scientific">Serratia marcescens</name>
    <dbReference type="NCBI Taxonomy" id="615"/>
</organismHost>
<sequence>MAIPKKLRLFTLYVDGTNHIGKIPSVTLPKVTRKTEDYQGGGMQGAVAVDLGLDGGALDASMVVGGVVEELILKYGGDIDEMRLRFVGEIYSGGTSSLMEVEMRGRITEIDPGEAKQGDDTNHTYAIKNTYYKLSVDDKALLEIDLLNFIYKRDGKNLYPDRIVSALGLGG</sequence>
<keyword id="KW-0903">Direct protein sequencing</keyword>
<keyword id="KW-1242">Viral contractile tail ejection system</keyword>
<keyword id="KW-1171">Viral genome ejection through host cell envelope</keyword>
<keyword id="KW-1162">Viral penetration into host cytoplasm</keyword>
<keyword id="KW-1227">Viral tail protein</keyword>
<keyword id="KW-1228">Viral tail tube protein</keyword>
<keyword id="KW-0946">Virion</keyword>
<keyword id="KW-1160">Virus entry into host cell</keyword>
<reference evidence="4 5" key="1">
    <citation type="journal article" date="2009" name="FEMS Microbiol. Lett.">
        <title>Morphological and genetic analysis of three bacteriophages of Serratia marcescens isolated from environmental water.</title>
        <authorList>
            <person name="Matsushita K."/>
            <person name="Uchiyama J."/>
            <person name="Kato S."/>
            <person name="Ujihara T."/>
            <person name="Hoshiba H."/>
            <person name="Sugihara S."/>
            <person name="Muraoka A."/>
            <person name="Wakiguchi H."/>
            <person name="Matsuzaki S."/>
        </authorList>
    </citation>
    <scope>NUCLEOTIDE SEQUENCE [GENOMIC DNA]</scope>
    <scope>PROTEIN SEQUENCE OF 2-20</scope>
</reference>
<dbReference type="EMBL" id="AB452988">
    <property type="protein sequence ID" value="BAH15157.1"/>
    <property type="molecule type" value="Genomic_DNA"/>
</dbReference>
<dbReference type="SMR" id="P85988"/>
<dbReference type="GO" id="GO:0098026">
    <property type="term" value="C:virus tail, tube"/>
    <property type="evidence" value="ECO:0007669"/>
    <property type="project" value="UniProtKB-KW"/>
</dbReference>
<dbReference type="GO" id="GO:0099000">
    <property type="term" value="P:symbiont genome ejection through host cell envelope, contractile tail mechanism"/>
    <property type="evidence" value="ECO:0007669"/>
    <property type="project" value="UniProtKB-KW"/>
</dbReference>
<dbReference type="InterPro" id="IPR006498">
    <property type="entry name" value="Tail_tube"/>
</dbReference>
<dbReference type="NCBIfam" id="TIGR01611">
    <property type="entry name" value="tail_tube"/>
    <property type="match status" value="1"/>
</dbReference>
<dbReference type="Pfam" id="PF04985">
    <property type="entry name" value="Phage_tube"/>
    <property type="match status" value="1"/>
</dbReference>
<organism>
    <name type="scientific">Serratia phage KSP20</name>
    <name type="common">Serratia marcescens bacteriophage KSP20</name>
    <dbReference type="NCBI Taxonomy" id="552527"/>
    <lineage>
        <taxon>Viruses</taxon>
        <taxon>Duplodnaviria</taxon>
        <taxon>Heunggongvirae</taxon>
        <taxon>Uroviricota</taxon>
        <taxon>Caudoviricetes</taxon>
        <taxon>Peduoviridae</taxon>
    </lineage>
</organism>
<comment type="function">
    <text evidence="1">Forms the virus tail tube.</text>
</comment>
<comment type="subcellular location">
    <subcellularLocation>
        <location evidence="2">Virion</location>
    </subcellularLocation>
</comment>
<accession>P85988</accession>
<accession>B9A7B1</accession>
<proteinExistence type="evidence at protein level"/>
<feature type="initiator methionine" description="Removed" evidence="2">
    <location>
        <position position="1"/>
    </location>
</feature>
<feature type="chain" id="PRO_0000351155" description="Major tail tube protein" evidence="2">
    <location>
        <begin position="2"/>
        <end position="171"/>
    </location>
</feature>
<evidence type="ECO:0000250" key="1">
    <source>
        <dbReference type="UniProtKB" id="P22502"/>
    </source>
</evidence>
<evidence type="ECO:0000269" key="2">
    <source>
    </source>
</evidence>
<evidence type="ECO:0000303" key="3">
    <source>
    </source>
</evidence>
<evidence type="ECO:0000305" key="4"/>
<evidence type="ECO:0000312" key="5">
    <source>
        <dbReference type="EMBL" id="BAH15157.1"/>
    </source>
</evidence>